<feature type="chain" id="PRO_1000138359" description="HTH-type transcriptional repressor FabR">
    <location>
        <begin position="1"/>
        <end position="215"/>
    </location>
</feature>
<feature type="domain" description="HTH tetR-type" evidence="1">
    <location>
        <begin position="10"/>
        <end position="70"/>
    </location>
</feature>
<feature type="DNA-binding region" description="H-T-H motif" evidence="1">
    <location>
        <begin position="33"/>
        <end position="52"/>
    </location>
</feature>
<name>FABR_ECODH</name>
<comment type="function">
    <text evidence="1">Represses the transcription of fabB, involved in unsaturated fatty acid (UFA) biosynthesis. By controlling UFA production, FabR directly influences the physical properties of the membrane bilayer.</text>
</comment>
<comment type="subunit">
    <text evidence="1">Homodimer.</text>
</comment>
<comment type="subcellular location">
    <subcellularLocation>
        <location evidence="1">Cytoplasm</location>
    </subcellularLocation>
</comment>
<keyword id="KW-0963">Cytoplasm</keyword>
<keyword id="KW-0238">DNA-binding</keyword>
<keyword id="KW-0275">Fatty acid biosynthesis</keyword>
<keyword id="KW-0276">Fatty acid metabolism</keyword>
<keyword id="KW-0444">Lipid biosynthesis</keyword>
<keyword id="KW-0443">Lipid metabolism</keyword>
<keyword id="KW-0678">Repressor</keyword>
<keyword id="KW-0804">Transcription</keyword>
<keyword id="KW-0805">Transcription regulation</keyword>
<dbReference type="EMBL" id="CP000948">
    <property type="protein sequence ID" value="ACB04974.1"/>
    <property type="molecule type" value="Genomic_DNA"/>
</dbReference>
<dbReference type="SMR" id="B1XBX4"/>
<dbReference type="KEGG" id="ecd:ECDH10B_4152"/>
<dbReference type="HOGENOM" id="CLU_081861_0_0_6"/>
<dbReference type="GO" id="GO:0005737">
    <property type="term" value="C:cytoplasm"/>
    <property type="evidence" value="ECO:0007669"/>
    <property type="project" value="UniProtKB-SubCell"/>
</dbReference>
<dbReference type="GO" id="GO:0003677">
    <property type="term" value="F:DNA binding"/>
    <property type="evidence" value="ECO:0007669"/>
    <property type="project" value="UniProtKB-KW"/>
</dbReference>
<dbReference type="GO" id="GO:0003700">
    <property type="term" value="F:DNA-binding transcription factor activity"/>
    <property type="evidence" value="ECO:0007669"/>
    <property type="project" value="UniProtKB-UniRule"/>
</dbReference>
<dbReference type="GO" id="GO:0006633">
    <property type="term" value="P:fatty acid biosynthetic process"/>
    <property type="evidence" value="ECO:0007669"/>
    <property type="project" value="UniProtKB-UniRule"/>
</dbReference>
<dbReference type="GO" id="GO:0045717">
    <property type="term" value="P:negative regulation of fatty acid biosynthetic process"/>
    <property type="evidence" value="ECO:0007669"/>
    <property type="project" value="UniProtKB-UniRule"/>
</dbReference>
<dbReference type="FunFam" id="1.10.10.60:FF:000034">
    <property type="entry name" value="HTH-type transcriptional repressor FabR"/>
    <property type="match status" value="1"/>
</dbReference>
<dbReference type="FunFam" id="1.10.357.10:FF:000001">
    <property type="entry name" value="HTH-type transcriptional repressor FabR"/>
    <property type="match status" value="1"/>
</dbReference>
<dbReference type="Gene3D" id="1.10.10.60">
    <property type="entry name" value="Homeodomain-like"/>
    <property type="match status" value="1"/>
</dbReference>
<dbReference type="Gene3D" id="1.10.357.10">
    <property type="entry name" value="Tetracycline Repressor, domain 2"/>
    <property type="match status" value="1"/>
</dbReference>
<dbReference type="HAMAP" id="MF_01190">
    <property type="entry name" value="HTH_type_FabR"/>
    <property type="match status" value="1"/>
</dbReference>
<dbReference type="InterPro" id="IPR054129">
    <property type="entry name" value="DesT_TetR_C"/>
</dbReference>
<dbReference type="InterPro" id="IPR009057">
    <property type="entry name" value="Homeodomain-like_sf"/>
</dbReference>
<dbReference type="InterPro" id="IPR001647">
    <property type="entry name" value="HTH_TetR"/>
</dbReference>
<dbReference type="InterPro" id="IPR050692">
    <property type="entry name" value="HTH_transcr_repressor_FabR"/>
</dbReference>
<dbReference type="InterPro" id="IPR023764">
    <property type="entry name" value="Tscrpt_reg_HTH_FabR"/>
</dbReference>
<dbReference type="NCBIfam" id="NF008402">
    <property type="entry name" value="PRK11202.1"/>
    <property type="match status" value="1"/>
</dbReference>
<dbReference type="PANTHER" id="PTHR47752">
    <property type="entry name" value="HTH-TYPE TRANSCRIPTIONAL REPRESSOR FABR"/>
    <property type="match status" value="1"/>
</dbReference>
<dbReference type="PANTHER" id="PTHR47752:SF1">
    <property type="entry name" value="HTH-TYPE TRANSCRIPTIONAL REPRESSOR FABR"/>
    <property type="match status" value="1"/>
</dbReference>
<dbReference type="Pfam" id="PF21943">
    <property type="entry name" value="TetR_C_46"/>
    <property type="match status" value="1"/>
</dbReference>
<dbReference type="Pfam" id="PF00440">
    <property type="entry name" value="TetR_N"/>
    <property type="match status" value="1"/>
</dbReference>
<dbReference type="SUPFAM" id="SSF46689">
    <property type="entry name" value="Homeodomain-like"/>
    <property type="match status" value="1"/>
</dbReference>
<dbReference type="PROSITE" id="PS50977">
    <property type="entry name" value="HTH_TETR_2"/>
    <property type="match status" value="1"/>
</dbReference>
<gene>
    <name evidence="1" type="primary">fabR</name>
    <name type="ordered locus">ECDH10B_4152</name>
</gene>
<reference key="1">
    <citation type="journal article" date="2008" name="J. Bacteriol.">
        <title>The complete genome sequence of Escherichia coli DH10B: insights into the biology of a laboratory workhorse.</title>
        <authorList>
            <person name="Durfee T."/>
            <person name="Nelson R."/>
            <person name="Baldwin S."/>
            <person name="Plunkett G. III"/>
            <person name="Burland V."/>
            <person name="Mau B."/>
            <person name="Petrosino J.F."/>
            <person name="Qin X."/>
            <person name="Muzny D.M."/>
            <person name="Ayele M."/>
            <person name="Gibbs R.A."/>
            <person name="Csorgo B."/>
            <person name="Posfai G."/>
            <person name="Weinstock G.M."/>
            <person name="Blattner F.R."/>
        </authorList>
    </citation>
    <scope>NUCLEOTIDE SEQUENCE [LARGE SCALE GENOMIC DNA]</scope>
    <source>
        <strain>K12 / DH10B</strain>
    </source>
</reference>
<accession>B1XBX4</accession>
<sequence>MGVRAQQKEKTRRSLVEAAFSQLSAERSFASLSLREVAREAGIAPTSFYRHFRDVDELGLTMVDESGLMLRQLMRQARQRIAKGGSVIRTSVSTFMEFIGNNPNAFRLLLRERSGTSAAFRAAVAREIQHFIAELADYLELENHMPRAFTEAQAEAMVTIVFSAGAEALDVGVEQRRQLEERLVLQLRMISKGAYYWYRREQEKTAIIPGNVKDE</sequence>
<organism>
    <name type="scientific">Escherichia coli (strain K12 / DH10B)</name>
    <dbReference type="NCBI Taxonomy" id="316385"/>
    <lineage>
        <taxon>Bacteria</taxon>
        <taxon>Pseudomonadati</taxon>
        <taxon>Pseudomonadota</taxon>
        <taxon>Gammaproteobacteria</taxon>
        <taxon>Enterobacterales</taxon>
        <taxon>Enterobacteriaceae</taxon>
        <taxon>Escherichia</taxon>
    </lineage>
</organism>
<proteinExistence type="inferred from homology"/>
<protein>
    <recommendedName>
        <fullName evidence="1">HTH-type transcriptional repressor FabR</fullName>
    </recommendedName>
</protein>
<evidence type="ECO:0000255" key="1">
    <source>
        <dbReference type="HAMAP-Rule" id="MF_01190"/>
    </source>
</evidence>